<gene>
    <name evidence="4" type="primary">oleW</name>
    <name evidence="5" type="synonym">orf11</name>
</gene>
<dbReference type="EC" id="1.1.1.384" evidence="3"/>
<dbReference type="EMBL" id="AF055579">
    <property type="protein sequence ID" value="AAD55450.1"/>
    <property type="molecule type" value="Genomic_DNA"/>
</dbReference>
<dbReference type="EMBL" id="AH009200">
    <property type="protein sequence ID" value="AAF59931.1"/>
    <property type="molecule type" value="Genomic_DNA"/>
</dbReference>
<dbReference type="PIR" id="T51102">
    <property type="entry name" value="T51102"/>
</dbReference>
<dbReference type="SMR" id="Q9RR32"/>
<dbReference type="KEGG" id="ag:AAD55450"/>
<dbReference type="BioCyc" id="MetaCyc:MONOMER-17065"/>
<dbReference type="BRENDA" id="1.1.1.384">
    <property type="organism ID" value="5974"/>
</dbReference>
<dbReference type="GO" id="GO:0000166">
    <property type="term" value="F:nucleotide binding"/>
    <property type="evidence" value="ECO:0007669"/>
    <property type="project" value="InterPro"/>
</dbReference>
<dbReference type="GO" id="GO:0016491">
    <property type="term" value="F:oxidoreductase activity"/>
    <property type="evidence" value="ECO:0007669"/>
    <property type="project" value="UniProtKB-KW"/>
</dbReference>
<dbReference type="GO" id="GO:0017000">
    <property type="term" value="P:antibiotic biosynthetic process"/>
    <property type="evidence" value="ECO:0007669"/>
    <property type="project" value="UniProtKB-KW"/>
</dbReference>
<dbReference type="Gene3D" id="3.30.360.10">
    <property type="entry name" value="Dihydrodipicolinate Reductase, domain 2"/>
    <property type="match status" value="1"/>
</dbReference>
<dbReference type="Gene3D" id="3.40.50.720">
    <property type="entry name" value="NAD(P)-binding Rossmann-like Domain"/>
    <property type="match status" value="1"/>
</dbReference>
<dbReference type="InterPro" id="IPR000683">
    <property type="entry name" value="Gfo/Idh/MocA-like_OxRdtase_N"/>
</dbReference>
<dbReference type="InterPro" id="IPR050984">
    <property type="entry name" value="Gfo/Idh/MocA_domain"/>
</dbReference>
<dbReference type="InterPro" id="IPR055170">
    <property type="entry name" value="GFO_IDH_MocA-like_dom"/>
</dbReference>
<dbReference type="InterPro" id="IPR036291">
    <property type="entry name" value="NAD(P)-bd_dom_sf"/>
</dbReference>
<dbReference type="PANTHER" id="PTHR22604">
    <property type="entry name" value="OXIDOREDUCTASES"/>
    <property type="match status" value="1"/>
</dbReference>
<dbReference type="PANTHER" id="PTHR22604:SF105">
    <property type="entry name" value="TRANS-1,2-DIHYDROBENZENE-1,2-DIOL DEHYDROGENASE"/>
    <property type="match status" value="1"/>
</dbReference>
<dbReference type="Pfam" id="PF01408">
    <property type="entry name" value="GFO_IDH_MocA"/>
    <property type="match status" value="1"/>
</dbReference>
<dbReference type="Pfam" id="PF22725">
    <property type="entry name" value="GFO_IDH_MocA_C3"/>
    <property type="match status" value="1"/>
</dbReference>
<dbReference type="SUPFAM" id="SSF55347">
    <property type="entry name" value="Glyceraldehyde-3-phosphate dehydrogenase-like, C-terminal domain"/>
    <property type="match status" value="1"/>
</dbReference>
<dbReference type="SUPFAM" id="SSF51735">
    <property type="entry name" value="NAD(P)-binding Rossmann-fold domains"/>
    <property type="match status" value="1"/>
</dbReference>
<proteinExistence type="evidence at protein level"/>
<comment type="function">
    <text evidence="2 3">Involved in the biosynthesis of one of the two 2,6-deoxysugars, dTDP-L-oleandrose, attached to the macrolactone ring oleandolide to produce the aglycone antibiotic oleandomycin (PubMed:10770761, Ref.1). Catalyzes the reduction of the C-3 keto moiety of dTDP-3,4-diketo-2,6-dideoxy-alpha-D-glucose to yield dTDP-4-keto-2,6-dideoxy-alpha-D-glucose (Ref.1). NADPH is the better reductant, however NADH can also be used (Ref.1).</text>
</comment>
<comment type="catalytic activity">
    <reaction evidence="3">
        <text>dTDP-4-dehydro-2,6-dideoxy-alpha-D-glucose + NADP(+) = dTDP-3,4-didehydro-2,6-dideoxy-alpha-D-glucose + NADPH + H(+)</text>
        <dbReference type="Rhea" id="RHEA:44624"/>
        <dbReference type="ChEBI" id="CHEBI:15378"/>
        <dbReference type="ChEBI" id="CHEBI:57783"/>
        <dbReference type="ChEBI" id="CHEBI:58349"/>
        <dbReference type="ChEBI" id="CHEBI:84537"/>
        <dbReference type="ChEBI" id="CHEBI:84540"/>
        <dbReference type="EC" id="1.1.1.384"/>
    </reaction>
</comment>
<comment type="pathway">
    <text evidence="7 8">Antibiotic biosynthesis.</text>
</comment>
<comment type="similarity">
    <text evidence="6">Belongs to the Gfo/Idh/MocA family.</text>
</comment>
<accession>Q9RR32</accession>
<evidence type="ECO:0000250" key="1">
    <source>
        <dbReference type="UniProtKB" id="B3TMR8"/>
    </source>
</evidence>
<evidence type="ECO:0000269" key="2">
    <source>
    </source>
</evidence>
<evidence type="ECO:0000269" key="3">
    <source ref="1"/>
</evidence>
<evidence type="ECO:0000303" key="4">
    <source>
    </source>
</evidence>
<evidence type="ECO:0000303" key="5">
    <source ref="1"/>
</evidence>
<evidence type="ECO:0000305" key="6"/>
<evidence type="ECO:0000305" key="7">
    <source>
    </source>
</evidence>
<evidence type="ECO:0000305" key="8">
    <source ref="1"/>
</evidence>
<evidence type="ECO:0000312" key="9">
    <source>
        <dbReference type="EMBL" id="AAD55450.1"/>
    </source>
</evidence>
<evidence type="ECO:0000312" key="10">
    <source>
        <dbReference type="EMBL" id="AAF59931.1"/>
    </source>
</evidence>
<keyword id="KW-0045">Antibiotic biosynthesis</keyword>
<keyword id="KW-0521">NADP</keyword>
<keyword id="KW-0560">Oxidoreductase</keyword>
<feature type="chain" id="PRO_0000444244" description="dTDP-3,4-didehydro-2,6-dideoxy-alpha-D-glucose 3-reductase">
    <location>
        <begin position="1"/>
        <end position="328"/>
    </location>
</feature>
<feature type="active site" description="Proton donor" evidence="1">
    <location>
        <position position="98"/>
    </location>
</feature>
<feature type="binding site" evidence="1">
    <location>
        <position position="20"/>
    </location>
    <ligand>
        <name>substrate</name>
    </ligand>
</feature>
<feature type="binding site" evidence="1">
    <location>
        <begin position="38"/>
        <end position="39"/>
    </location>
    <ligand>
        <name>NADP(+)</name>
        <dbReference type="ChEBI" id="CHEBI:58349"/>
    </ligand>
</feature>
<feature type="binding site" evidence="1">
    <location>
        <position position="75"/>
    </location>
    <ligand>
        <name>NADP(+)</name>
        <dbReference type="ChEBI" id="CHEBI:58349"/>
    </ligand>
</feature>
<feature type="binding site" evidence="1">
    <location>
        <position position="80"/>
    </location>
    <ligand>
        <name>NADP(+)</name>
        <dbReference type="ChEBI" id="CHEBI:58349"/>
    </ligand>
</feature>
<feature type="binding site" evidence="1">
    <location>
        <position position="166"/>
    </location>
    <ligand>
        <name>NADP(+)</name>
        <dbReference type="ChEBI" id="CHEBI:58349"/>
    </ligand>
</feature>
<feature type="binding site" evidence="1">
    <location>
        <position position="178"/>
    </location>
    <ligand>
        <name>NADP(+)</name>
        <dbReference type="ChEBI" id="CHEBI:58349"/>
    </ligand>
</feature>
<feature type="binding site" evidence="1">
    <location>
        <position position="236"/>
    </location>
    <ligand>
        <name>substrate</name>
    </ligand>
</feature>
<feature type="binding site" evidence="1">
    <location>
        <position position="256"/>
    </location>
    <ligand>
        <name>substrate</name>
    </ligand>
</feature>
<sequence length="328" mass="35835">MPSPRLRFGVLGAADIALRRTVPALLAHPDVTVVAVSSRDTARAARFAAAFGCEAVPGHQALLDRDDIDALYVPLPVMVHTPWVEAALLRGRHVLVEKPLTATRSGAEDLIALARSRGLVLMENFTSLHHAQHGTVTDLLRDGTIGELRSLSAAFTIPPKPEGDIRYQPDVGGGALLDIGIYPLRAALHFLGPDLHAAGAVLRRERRRNVVVSGHVLLTTPHGVVAELAFGMEHAYRSEYTLFGTAGRLRLDRAFTPPETHRPRVEIHRQDALDIVDLPPDAQFANLVRDFVLAVREGPGRLTQHHADAVRQADLVERVMAVARVRWC</sequence>
<protein>
    <recommendedName>
        <fullName evidence="5">dTDP-3,4-didehydro-2,6-dideoxy-alpha-D-glucose 3-reductase</fullName>
        <ecNumber evidence="3">1.1.1.384</ecNumber>
    </recommendedName>
    <alternativeName>
        <fullName evidence="6">dTDP-3,4-diketo-2,6-dideoxyglucose 3-ketoreductase</fullName>
    </alternativeName>
</protein>
<name>OLEW_STRAT</name>
<organism>
    <name type="scientific">Streptomyces antibioticus</name>
    <dbReference type="NCBI Taxonomy" id="1890"/>
    <lineage>
        <taxon>Bacteria</taxon>
        <taxon>Bacillati</taxon>
        <taxon>Actinomycetota</taxon>
        <taxon>Actinomycetes</taxon>
        <taxon>Kitasatosporales</taxon>
        <taxon>Streptomycetaceae</taxon>
        <taxon>Streptomyces</taxon>
    </lineage>
</organism>
<reference key="1">
    <citation type="journal article" date="1999" name="J. Am. Chem. Soc.">
        <title>Mechanism of the 2-deoxygenation step in the biosynthesis of the deoxyhexose moieties of the antibiotics granaticin and oleandomycin.</title>
        <authorList>
            <person name="Draeger G."/>
            <person name="Park S.-H.H."/>
            <person name="Floss H.G."/>
        </authorList>
    </citation>
    <scope>NUCLEOTIDE SEQUENCE [GENOMIC DNA]</scope>
    <scope>FUNCTION</scope>
    <scope>CATALYTIC ACTIVITY</scope>
    <scope>PATHWAY</scope>
    <scope>SUBSTRATE SPECIFICITY</scope>
    <source>
        <strain evidence="10">Tu99</strain>
    </source>
</reference>
<reference key="2">
    <citation type="journal article" date="2000" name="Antimicrob. Agents Chemother.">
        <title>Identification and expression of genes involved in biosynthesis of L-oleandrose and its intermediate L-olivose in the oleandomycin producer Streptomyces antibioticus.</title>
        <authorList>
            <person name="Aguirrezabalaga I."/>
            <person name="Olano C."/>
            <person name="Allende N."/>
            <person name="Rodriguez L."/>
            <person name="Brana A.F."/>
            <person name="Mendez C."/>
            <person name="Salas J.A."/>
        </authorList>
    </citation>
    <scope>NUCLEOTIDE SEQUENCE [GENOMIC DNA]</scope>
    <scope>FUNCTION</scope>
    <scope>PATHWAY</scope>
    <source>
        <strain evidence="9">ATCC 11891 / DSM 40868 / BCRC 11580 / NCIMB 11506 / PSA 205</strain>
    </source>
</reference>
<reference key="3">
    <citation type="submission" date="2000-02" db="EMBL/GenBank/DDBJ databases">
        <title>A cluster of genes from Streptomyces antibioticus involved in the biosynthesis of the deoxysugar moieties of oleandomycin.</title>
        <authorList>
            <person name="Park S.H."/>
            <person name="Sohng J.K."/>
            <person name="August P.R."/>
            <person name="Niggemann J."/>
            <person name="Floss H.G."/>
        </authorList>
    </citation>
    <scope>NUCLEOTIDE SEQUENCE [GENOMIC DNA]</scope>
    <source>
        <strain evidence="10">Tu99</strain>
    </source>
</reference>